<feature type="chain" id="PRO_0000359237" description="Acireductone dioxygenase">
    <location>
        <begin position="1"/>
        <end position="181"/>
    </location>
</feature>
<feature type="binding site" evidence="1">
    <location>
        <position position="98"/>
    </location>
    <ligand>
        <name>Fe(2+)</name>
        <dbReference type="ChEBI" id="CHEBI:29033"/>
    </ligand>
</feature>
<feature type="binding site" evidence="1">
    <location>
        <position position="98"/>
    </location>
    <ligand>
        <name>Ni(2+)</name>
        <dbReference type="ChEBI" id="CHEBI:49786"/>
    </ligand>
</feature>
<feature type="binding site" evidence="1">
    <location>
        <position position="100"/>
    </location>
    <ligand>
        <name>Fe(2+)</name>
        <dbReference type="ChEBI" id="CHEBI:29033"/>
    </ligand>
</feature>
<feature type="binding site" evidence="1">
    <location>
        <position position="100"/>
    </location>
    <ligand>
        <name>Ni(2+)</name>
        <dbReference type="ChEBI" id="CHEBI:49786"/>
    </ligand>
</feature>
<feature type="binding site" evidence="1">
    <location>
        <position position="104"/>
    </location>
    <ligand>
        <name>Fe(2+)</name>
        <dbReference type="ChEBI" id="CHEBI:29033"/>
    </ligand>
</feature>
<feature type="binding site" evidence="1">
    <location>
        <position position="104"/>
    </location>
    <ligand>
        <name>Ni(2+)</name>
        <dbReference type="ChEBI" id="CHEBI:49786"/>
    </ligand>
</feature>
<feature type="binding site" evidence="1">
    <location>
        <position position="142"/>
    </location>
    <ligand>
        <name>Fe(2+)</name>
        <dbReference type="ChEBI" id="CHEBI:29033"/>
    </ligand>
</feature>
<feature type="binding site" evidence="1">
    <location>
        <position position="142"/>
    </location>
    <ligand>
        <name>Ni(2+)</name>
        <dbReference type="ChEBI" id="CHEBI:49786"/>
    </ligand>
</feature>
<feature type="site" description="May play a role in metal incorporation in vivo" evidence="1">
    <location>
        <position position="97"/>
    </location>
</feature>
<feature type="site" description="May play a role in transmitting local conformational changes" evidence="1">
    <location>
        <position position="103"/>
    </location>
</feature>
<feature type="site" description="Important to generate the dianion" evidence="1">
    <location>
        <position position="106"/>
    </location>
</feature>
<keyword id="KW-0028">Amino-acid biosynthesis</keyword>
<keyword id="KW-0223">Dioxygenase</keyword>
<keyword id="KW-0408">Iron</keyword>
<keyword id="KW-0479">Metal-binding</keyword>
<keyword id="KW-0486">Methionine biosynthesis</keyword>
<keyword id="KW-0533">Nickel</keyword>
<keyword id="KW-0560">Oxidoreductase</keyword>
<proteinExistence type="inferred from homology"/>
<organism>
    <name type="scientific">Synechococcus sp. (strain ATCC 27144 / PCC 6301 / SAUG 1402/1)</name>
    <name type="common">Anacystis nidulans</name>
    <dbReference type="NCBI Taxonomy" id="269084"/>
    <lineage>
        <taxon>Bacteria</taxon>
        <taxon>Bacillati</taxon>
        <taxon>Cyanobacteriota</taxon>
        <taxon>Cyanophyceae</taxon>
        <taxon>Synechococcales</taxon>
        <taxon>Synechococcaceae</taxon>
        <taxon>Synechococcus</taxon>
    </lineage>
</organism>
<accession>Q5N3L4</accession>
<evidence type="ECO:0000255" key="1">
    <source>
        <dbReference type="HAMAP-Rule" id="MF_01682"/>
    </source>
</evidence>
<evidence type="ECO:0000305" key="2"/>
<reference key="1">
    <citation type="journal article" date="2007" name="Photosyn. Res.">
        <title>Complete nucleotide sequence of the freshwater unicellular cyanobacterium Synechococcus elongatus PCC 6301 chromosome: gene content and organization.</title>
        <authorList>
            <person name="Sugita C."/>
            <person name="Ogata K."/>
            <person name="Shikata M."/>
            <person name="Jikuya H."/>
            <person name="Takano J."/>
            <person name="Furumichi M."/>
            <person name="Kanehisa M."/>
            <person name="Omata T."/>
            <person name="Sugiura M."/>
            <person name="Sugita M."/>
        </authorList>
    </citation>
    <scope>NUCLEOTIDE SEQUENCE [LARGE SCALE GENOMIC DNA]</scope>
    <source>
        <strain>ATCC 27144 / PCC 6301 / SAUG 1402/1</strain>
    </source>
</reference>
<name>MTND_SYNP6</name>
<comment type="function">
    <text evidence="1">Catalyzes 2 different reactions between oxygen and the acireductone 1,2-dihydroxy-3-keto-5-methylthiopentene (DHK-MTPene) depending upon the metal bound in the active site. Fe-containing acireductone dioxygenase (Fe-ARD) produces formate and 2-keto-4-methylthiobutyrate (KMTB), the alpha-ketoacid precursor of methionine in the methionine recycle pathway. Ni-containing acireductone dioxygenase (Ni-ARD) produces methylthiopropionate, carbon monoxide and formate, and does not lie on the methionine recycle pathway.</text>
</comment>
<comment type="catalytic activity">
    <reaction evidence="1">
        <text>1,2-dihydroxy-5-(methylsulfanyl)pent-1-en-3-one + O2 = 3-(methylsulfanyl)propanoate + CO + formate + 2 H(+)</text>
        <dbReference type="Rhea" id="RHEA:14161"/>
        <dbReference type="ChEBI" id="CHEBI:15378"/>
        <dbReference type="ChEBI" id="CHEBI:15379"/>
        <dbReference type="ChEBI" id="CHEBI:15740"/>
        <dbReference type="ChEBI" id="CHEBI:17245"/>
        <dbReference type="ChEBI" id="CHEBI:49016"/>
        <dbReference type="ChEBI" id="CHEBI:49252"/>
        <dbReference type="EC" id="1.13.11.53"/>
    </reaction>
</comment>
<comment type="catalytic activity">
    <reaction evidence="1">
        <text>1,2-dihydroxy-5-(methylsulfanyl)pent-1-en-3-one + O2 = 4-methylsulfanyl-2-oxobutanoate + formate + 2 H(+)</text>
        <dbReference type="Rhea" id="RHEA:24504"/>
        <dbReference type="ChEBI" id="CHEBI:15378"/>
        <dbReference type="ChEBI" id="CHEBI:15379"/>
        <dbReference type="ChEBI" id="CHEBI:15740"/>
        <dbReference type="ChEBI" id="CHEBI:16723"/>
        <dbReference type="ChEBI" id="CHEBI:49252"/>
        <dbReference type="EC" id="1.13.11.54"/>
    </reaction>
</comment>
<comment type="cofactor">
    <cofactor evidence="1">
        <name>Fe(2+)</name>
        <dbReference type="ChEBI" id="CHEBI:29033"/>
    </cofactor>
    <text evidence="1">Binds 1 Fe(2+) cation per monomer.</text>
</comment>
<comment type="cofactor">
    <cofactor evidence="1">
        <name>Ni(2+)</name>
        <dbReference type="ChEBI" id="CHEBI:49786"/>
    </cofactor>
    <text evidence="1">Binds 1 nickel ion per monomer.</text>
</comment>
<comment type="pathway">
    <text evidence="1">Amino-acid biosynthesis; L-methionine biosynthesis via salvage pathway; L-methionine from S-methyl-5-thio-alpha-D-ribose 1-phosphate: step 5/6.</text>
</comment>
<comment type="subunit">
    <text evidence="1">Monomer.</text>
</comment>
<comment type="similarity">
    <text evidence="1">Belongs to the acireductone dioxygenase (ARD) family.</text>
</comment>
<comment type="sequence caution" evidence="2">
    <conflict type="erroneous initiation">
        <sequence resource="EMBL-CDS" id="BAD79106"/>
    </conflict>
</comment>
<gene>
    <name evidence="1" type="primary">mtnD</name>
    <name type="ordered locus">syc0916_c</name>
</gene>
<protein>
    <recommendedName>
        <fullName evidence="1">Acireductone dioxygenase</fullName>
    </recommendedName>
    <alternativeName>
        <fullName evidence="1">1,2-dihydroxy-3-keto-5-methylthiopentene dioxygenase</fullName>
        <shortName evidence="1">DHK-MTPene dioxygenase</shortName>
    </alternativeName>
    <alternativeName>
        <fullName evidence="1">Acireductone dioxygenase (Fe(2+)-requiring)</fullName>
        <shortName evidence="1">ARD'</shortName>
        <shortName evidence="1">Fe-ARD</shortName>
        <ecNumber evidence="1">1.13.11.54</ecNumber>
    </alternativeName>
    <alternativeName>
        <fullName evidence="1">Acireductone dioxygenase (Ni(2+)-requiring)</fullName>
        <shortName evidence="1">ARD</shortName>
        <shortName evidence="1">Ni-ARD</shortName>
        <ecNumber evidence="1">1.13.11.53</ecNumber>
    </alternativeName>
</protein>
<dbReference type="EC" id="1.13.11.54" evidence="1"/>
<dbReference type="EC" id="1.13.11.53" evidence="1"/>
<dbReference type="EMBL" id="AP008231">
    <property type="protein sequence ID" value="BAD79106.1"/>
    <property type="status" value="ALT_INIT"/>
    <property type="molecule type" value="Genomic_DNA"/>
</dbReference>
<dbReference type="SMR" id="Q5N3L4"/>
<dbReference type="KEGG" id="syc:syc0916_c"/>
<dbReference type="eggNOG" id="COG1791">
    <property type="taxonomic scope" value="Bacteria"/>
</dbReference>
<dbReference type="UniPathway" id="UPA00904">
    <property type="reaction ID" value="UER00878"/>
</dbReference>
<dbReference type="Proteomes" id="UP000001175">
    <property type="component" value="Chromosome"/>
</dbReference>
<dbReference type="GO" id="GO:0010308">
    <property type="term" value="F:acireductone dioxygenase (Ni2+-requiring) activity"/>
    <property type="evidence" value="ECO:0007669"/>
    <property type="project" value="UniProtKB-UniRule"/>
</dbReference>
<dbReference type="GO" id="GO:0010309">
    <property type="term" value="F:acireductone dioxygenase [iron(II)-requiring] activity"/>
    <property type="evidence" value="ECO:0007669"/>
    <property type="project" value="UniProtKB-UniRule"/>
</dbReference>
<dbReference type="GO" id="GO:0005506">
    <property type="term" value="F:iron ion binding"/>
    <property type="evidence" value="ECO:0007669"/>
    <property type="project" value="UniProtKB-UniRule"/>
</dbReference>
<dbReference type="GO" id="GO:0016151">
    <property type="term" value="F:nickel cation binding"/>
    <property type="evidence" value="ECO:0007669"/>
    <property type="project" value="UniProtKB-UniRule"/>
</dbReference>
<dbReference type="GO" id="GO:0019509">
    <property type="term" value="P:L-methionine salvage from methylthioadenosine"/>
    <property type="evidence" value="ECO:0007669"/>
    <property type="project" value="UniProtKB-UniRule"/>
</dbReference>
<dbReference type="GO" id="GO:0019284">
    <property type="term" value="P:L-methionine salvage from S-adenosylmethionine"/>
    <property type="evidence" value="ECO:0007669"/>
    <property type="project" value="InterPro"/>
</dbReference>
<dbReference type="CDD" id="cd02232">
    <property type="entry name" value="cupin_ARD"/>
    <property type="match status" value="1"/>
</dbReference>
<dbReference type="Gene3D" id="2.60.120.10">
    <property type="entry name" value="Jelly Rolls"/>
    <property type="match status" value="1"/>
</dbReference>
<dbReference type="HAMAP" id="MF_01682">
    <property type="entry name" value="Salvage_MtnD"/>
    <property type="match status" value="1"/>
</dbReference>
<dbReference type="InterPro" id="IPR004313">
    <property type="entry name" value="ARD"/>
</dbReference>
<dbReference type="InterPro" id="IPR023956">
    <property type="entry name" value="ARD_bac"/>
</dbReference>
<dbReference type="InterPro" id="IPR014710">
    <property type="entry name" value="RmlC-like_jellyroll"/>
</dbReference>
<dbReference type="InterPro" id="IPR011051">
    <property type="entry name" value="RmlC_Cupin_sf"/>
</dbReference>
<dbReference type="PANTHER" id="PTHR23418">
    <property type="entry name" value="ACIREDUCTONE DIOXYGENASE"/>
    <property type="match status" value="1"/>
</dbReference>
<dbReference type="PANTHER" id="PTHR23418:SF0">
    <property type="entry name" value="ACIREDUCTONE DIOXYGENASE"/>
    <property type="match status" value="1"/>
</dbReference>
<dbReference type="Pfam" id="PF03079">
    <property type="entry name" value="ARD"/>
    <property type="match status" value="1"/>
</dbReference>
<dbReference type="SUPFAM" id="SSF51182">
    <property type="entry name" value="RmlC-like cupins"/>
    <property type="match status" value="1"/>
</dbReference>
<sequence>MTVLTIYREDLPEQPLTQATDGAAEIAALLAQQGLRFERWPAQVELADDATPEQILAAYATEVDRVKTEGGYITVDAVSLRPDHPDRAALRQKFLAEHIHSEDEVRFFVAGQGLFSLHLGDHVYALLCTQNDWISVPAGTRHWFDMGSQPYFTALRFFNNPEGWVAQFTGSDIASQFPLLP</sequence>